<feature type="chain" id="PRO_1000005936" description="DNA-directed RNA polymerase subunit omega">
    <location>
        <begin position="1"/>
        <end position="90"/>
    </location>
</feature>
<reference key="1">
    <citation type="journal article" date="2007" name="J. Bacteriol.">
        <title>Complete genome sequence of Haemophilus somnus (Histophilus somni) strain 129Pt and comparison to Haemophilus ducreyi 35000HP and Haemophilus influenzae Rd.</title>
        <authorList>
            <person name="Challacombe J.F."/>
            <person name="Duncan A.J."/>
            <person name="Brettin T.S."/>
            <person name="Bruce D."/>
            <person name="Chertkov O."/>
            <person name="Detter J.C."/>
            <person name="Han C.S."/>
            <person name="Misra M."/>
            <person name="Richardson P."/>
            <person name="Tapia R."/>
            <person name="Thayer N."/>
            <person name="Xie G."/>
            <person name="Inzana T.J."/>
        </authorList>
    </citation>
    <scope>NUCLEOTIDE SEQUENCE [LARGE SCALE GENOMIC DNA]</scope>
    <source>
        <strain>129Pt</strain>
    </source>
</reference>
<organism>
    <name type="scientific">Histophilus somni (strain 129Pt)</name>
    <name type="common">Haemophilus somnus</name>
    <dbReference type="NCBI Taxonomy" id="205914"/>
    <lineage>
        <taxon>Bacteria</taxon>
        <taxon>Pseudomonadati</taxon>
        <taxon>Pseudomonadota</taxon>
        <taxon>Gammaproteobacteria</taxon>
        <taxon>Pasteurellales</taxon>
        <taxon>Pasteurellaceae</taxon>
        <taxon>Histophilus</taxon>
    </lineage>
</organism>
<evidence type="ECO:0000255" key="1">
    <source>
        <dbReference type="HAMAP-Rule" id="MF_00366"/>
    </source>
</evidence>
<comment type="function">
    <text evidence="1">Promotes RNA polymerase assembly. Latches the N- and C-terminal regions of the beta' subunit thereby facilitating its interaction with the beta and alpha subunits.</text>
</comment>
<comment type="catalytic activity">
    <reaction evidence="1">
        <text>RNA(n) + a ribonucleoside 5'-triphosphate = RNA(n+1) + diphosphate</text>
        <dbReference type="Rhea" id="RHEA:21248"/>
        <dbReference type="Rhea" id="RHEA-COMP:14527"/>
        <dbReference type="Rhea" id="RHEA-COMP:17342"/>
        <dbReference type="ChEBI" id="CHEBI:33019"/>
        <dbReference type="ChEBI" id="CHEBI:61557"/>
        <dbReference type="ChEBI" id="CHEBI:140395"/>
        <dbReference type="EC" id="2.7.7.6"/>
    </reaction>
</comment>
<comment type="subunit">
    <text evidence="1">The RNAP catalytic core consists of 2 alpha, 1 beta, 1 beta' and 1 omega subunit. When a sigma factor is associated with the core the holoenzyme is formed, which can initiate transcription.</text>
</comment>
<comment type="similarity">
    <text evidence="1">Belongs to the RNA polymerase subunit omega family.</text>
</comment>
<sequence>MARVTVQDAVEKVGNRFDLILTAARRARELQLHKREPLVPEDNDKPTVIALREIEKGLINNDIMNAHERREALEQETAELNTISLLYQNN</sequence>
<dbReference type="EC" id="2.7.7.6" evidence="1"/>
<dbReference type="EMBL" id="CP000436">
    <property type="protein sequence ID" value="ABI25731.1"/>
    <property type="molecule type" value="Genomic_DNA"/>
</dbReference>
<dbReference type="SMR" id="Q0I5L9"/>
<dbReference type="KEGG" id="hso:HS_1456"/>
<dbReference type="eggNOG" id="COG1758">
    <property type="taxonomic scope" value="Bacteria"/>
</dbReference>
<dbReference type="HOGENOM" id="CLU_125406_5_2_6"/>
<dbReference type="GO" id="GO:0000428">
    <property type="term" value="C:DNA-directed RNA polymerase complex"/>
    <property type="evidence" value="ECO:0007669"/>
    <property type="project" value="UniProtKB-KW"/>
</dbReference>
<dbReference type="GO" id="GO:0003677">
    <property type="term" value="F:DNA binding"/>
    <property type="evidence" value="ECO:0007669"/>
    <property type="project" value="UniProtKB-UniRule"/>
</dbReference>
<dbReference type="GO" id="GO:0003899">
    <property type="term" value="F:DNA-directed RNA polymerase activity"/>
    <property type="evidence" value="ECO:0007669"/>
    <property type="project" value="UniProtKB-UniRule"/>
</dbReference>
<dbReference type="GO" id="GO:0006351">
    <property type="term" value="P:DNA-templated transcription"/>
    <property type="evidence" value="ECO:0007669"/>
    <property type="project" value="UniProtKB-UniRule"/>
</dbReference>
<dbReference type="Gene3D" id="3.90.940.10">
    <property type="match status" value="1"/>
</dbReference>
<dbReference type="HAMAP" id="MF_00366">
    <property type="entry name" value="RNApol_bact_RpoZ"/>
    <property type="match status" value="1"/>
</dbReference>
<dbReference type="InterPro" id="IPR003716">
    <property type="entry name" value="DNA-dir_RNA_pol_omega"/>
</dbReference>
<dbReference type="InterPro" id="IPR006110">
    <property type="entry name" value="Pol_omega/Rpo6/RPB6"/>
</dbReference>
<dbReference type="InterPro" id="IPR036161">
    <property type="entry name" value="RPB6/omega-like_sf"/>
</dbReference>
<dbReference type="NCBIfam" id="TIGR00690">
    <property type="entry name" value="rpoZ"/>
    <property type="match status" value="1"/>
</dbReference>
<dbReference type="PANTHER" id="PTHR34476">
    <property type="entry name" value="DNA-DIRECTED RNA POLYMERASE SUBUNIT OMEGA"/>
    <property type="match status" value="1"/>
</dbReference>
<dbReference type="PANTHER" id="PTHR34476:SF1">
    <property type="entry name" value="DNA-DIRECTED RNA POLYMERASE SUBUNIT OMEGA"/>
    <property type="match status" value="1"/>
</dbReference>
<dbReference type="Pfam" id="PF01192">
    <property type="entry name" value="RNA_pol_Rpb6"/>
    <property type="match status" value="1"/>
</dbReference>
<dbReference type="SMART" id="SM01409">
    <property type="entry name" value="RNA_pol_Rpb6"/>
    <property type="match status" value="1"/>
</dbReference>
<dbReference type="SUPFAM" id="SSF63562">
    <property type="entry name" value="RPB6/omega subunit-like"/>
    <property type="match status" value="1"/>
</dbReference>
<keyword id="KW-0240">DNA-directed RNA polymerase</keyword>
<keyword id="KW-0548">Nucleotidyltransferase</keyword>
<keyword id="KW-0804">Transcription</keyword>
<keyword id="KW-0808">Transferase</keyword>
<name>RPOZ_HISS1</name>
<proteinExistence type="inferred from homology"/>
<gene>
    <name evidence="1" type="primary">rpoZ</name>
    <name type="ordered locus">HS_1456</name>
</gene>
<accession>Q0I5L9</accession>
<protein>
    <recommendedName>
        <fullName evidence="1">DNA-directed RNA polymerase subunit omega</fullName>
        <shortName evidence="1">RNAP omega subunit</shortName>
        <ecNumber evidence="1">2.7.7.6</ecNumber>
    </recommendedName>
    <alternativeName>
        <fullName evidence="1">RNA polymerase omega subunit</fullName>
    </alternativeName>
    <alternativeName>
        <fullName evidence="1">Transcriptase subunit omega</fullName>
    </alternativeName>
</protein>